<comment type="function">
    <text evidence="2">Transporter required for vacuolar uptake of histidine and lysine.</text>
</comment>
<comment type="subcellular location">
    <subcellularLocation>
        <location>Vacuole membrane</location>
        <topology>Multi-pass membrane protein</topology>
    </subcellularLocation>
</comment>
<comment type="similarity">
    <text evidence="3">Belongs to the major facilitator superfamily.</text>
</comment>
<sequence>MNMLIVGRVVASVGGSGLQTLCFVIGCTMVGERSRPLVISILSCAFAVAAIVGPIIGGAFTTHVTWRWCFYINLPIGGLAIIMFLLTYKAENKGILQQIKDAIGTISSFTFSKFRHQVNFKRLMNGIIFKFDFFGFALCSAGLVLFLLGLTFGGNKYSWNSGQVIAYLVLGVLLFIFSLVYDFFLFDKFNPEPDNISYRPLLLRRLVAKPAIIIINMVTFLLCTGYNGQMIYSVQFFQLIFASSAWKAGLHLIPIVITNVIAAIASGVITKKLGLVKPLLIFGGVLGVIGAGLMTLMTNTSTKSTQIGVLLLPGFSLGFALQASLMSAQLQITKDRPEAAMDFIEVTAFNTFMKSLGTTLGGVLSTTVFSASFHNKVSRAHLEPYEGKTVDDMILYRLQNYDGSHSTIGNILSDSIKNVFWMDLGFYALGFLFCSFSSNKKLIIPKKDETPEDNLEDK</sequence>
<organism>
    <name type="scientific">Saccharomyces cerevisiae (strain ATCC 204508 / S288c)</name>
    <name type="common">Baker's yeast</name>
    <dbReference type="NCBI Taxonomy" id="559292"/>
    <lineage>
        <taxon>Eukaryota</taxon>
        <taxon>Fungi</taxon>
        <taxon>Dikarya</taxon>
        <taxon>Ascomycota</taxon>
        <taxon>Saccharomycotina</taxon>
        <taxon>Saccharomycetes</taxon>
        <taxon>Saccharomycetales</taxon>
        <taxon>Saccharomycetaceae</taxon>
        <taxon>Saccharomyces</taxon>
    </lineage>
</organism>
<proteinExistence type="evidence at protein level"/>
<keyword id="KW-0029">Amino-acid transport</keyword>
<keyword id="KW-0325">Glycoprotein</keyword>
<keyword id="KW-0472">Membrane</keyword>
<keyword id="KW-1185">Reference proteome</keyword>
<keyword id="KW-0812">Transmembrane</keyword>
<keyword id="KW-1133">Transmembrane helix</keyword>
<keyword id="KW-0813">Transport</keyword>
<keyword id="KW-0926">Vacuole</keyword>
<reference key="1">
    <citation type="journal article" date="1992" name="Nature">
        <title>The complete DNA sequence of yeast chromosome III.</title>
        <authorList>
            <person name="Oliver S.G."/>
            <person name="van der Aart Q.J.M."/>
            <person name="Agostoni-Carbone M.L."/>
            <person name="Aigle M."/>
            <person name="Alberghina L."/>
            <person name="Alexandraki D."/>
            <person name="Antoine G."/>
            <person name="Anwar R."/>
            <person name="Ballesta J.P.G."/>
            <person name="Benit P."/>
            <person name="Berben G."/>
            <person name="Bergantino E."/>
            <person name="Biteau N."/>
            <person name="Bolle P.-A."/>
            <person name="Bolotin-Fukuhara M."/>
            <person name="Brown A."/>
            <person name="Brown A.J.P."/>
            <person name="Buhler J.-M."/>
            <person name="Carcano C."/>
            <person name="Carignani G."/>
            <person name="Cederberg H."/>
            <person name="Chanet R."/>
            <person name="Contreras R."/>
            <person name="Crouzet M."/>
            <person name="Daignan-Fornier B."/>
            <person name="Defoor E."/>
            <person name="Delgado M.D."/>
            <person name="Demolder J."/>
            <person name="Doira C."/>
            <person name="Dubois E."/>
            <person name="Dujon B."/>
            <person name="Duesterhoeft A."/>
            <person name="Erdmann D."/>
            <person name="Esteban M."/>
            <person name="Fabre F."/>
            <person name="Fairhead C."/>
            <person name="Faye G."/>
            <person name="Feldmann H."/>
            <person name="Fiers W."/>
            <person name="Francingues-Gaillard M.-C."/>
            <person name="Franco L."/>
            <person name="Frontali L."/>
            <person name="Fukuhara H."/>
            <person name="Fuller L.J."/>
            <person name="Galland P."/>
            <person name="Gent M.E."/>
            <person name="Gigot D."/>
            <person name="Gilliquet V."/>
            <person name="Glansdorff N."/>
            <person name="Goffeau A."/>
            <person name="Grenson M."/>
            <person name="Grisanti P."/>
            <person name="Grivell L.A."/>
            <person name="de Haan M."/>
            <person name="Haasemann M."/>
            <person name="Hatat D."/>
            <person name="Hoenicka J."/>
            <person name="Hegemann J.H."/>
            <person name="Herbert C.J."/>
            <person name="Hilger F."/>
            <person name="Hohmann S."/>
            <person name="Hollenberg C.P."/>
            <person name="Huse K."/>
            <person name="Iborra F."/>
            <person name="Indge K.J."/>
            <person name="Isono K."/>
            <person name="Jacq C."/>
            <person name="Jacquet M."/>
            <person name="James C.M."/>
            <person name="Jauniaux J.-C."/>
            <person name="Jia Y."/>
            <person name="Jimenez A."/>
            <person name="Kelly A."/>
            <person name="Kleinhans U."/>
            <person name="Kreisl P."/>
            <person name="Lanfranchi G."/>
            <person name="Lewis C."/>
            <person name="van der Linden C.G."/>
            <person name="Lucchini G."/>
            <person name="Lutzenkirchen K."/>
            <person name="Maat M.J."/>
            <person name="Mallet L."/>
            <person name="Mannhaupt G."/>
            <person name="Martegani E."/>
            <person name="Mathieu A."/>
            <person name="Maurer C.T.C."/>
            <person name="McConnell D."/>
            <person name="McKee R.A."/>
            <person name="Messenguy F."/>
            <person name="Mewes H.-W."/>
            <person name="Molemans F."/>
            <person name="Montague M.A."/>
            <person name="Muzi Falconi M."/>
            <person name="Navas L."/>
            <person name="Newlon C.S."/>
            <person name="Noone D."/>
            <person name="Pallier C."/>
            <person name="Panzeri L."/>
            <person name="Pearson B.M."/>
            <person name="Perea J."/>
            <person name="Philippsen P."/>
            <person name="Pierard A."/>
            <person name="Planta R.J."/>
            <person name="Plevani P."/>
            <person name="Poetsch B."/>
            <person name="Pohl F.M."/>
            <person name="Purnelle B."/>
            <person name="Ramezani Rad M."/>
            <person name="Rasmussen S.W."/>
            <person name="Raynal A."/>
            <person name="Remacha M.A."/>
            <person name="Richterich P."/>
            <person name="Roberts A.B."/>
            <person name="Rodriguez F."/>
            <person name="Sanz E."/>
            <person name="Schaaff-Gerstenschlaeger I."/>
            <person name="Scherens B."/>
            <person name="Schweitzer B."/>
            <person name="Shu Y."/>
            <person name="Skala J."/>
            <person name="Slonimski P.P."/>
            <person name="Sor F."/>
            <person name="Soustelle C."/>
            <person name="Spiegelberg R."/>
            <person name="Stateva L.I."/>
            <person name="Steensma H.Y."/>
            <person name="Steiner S."/>
            <person name="Thierry A."/>
            <person name="Thireos G."/>
            <person name="Tzermia M."/>
            <person name="Urrestarazu L.A."/>
            <person name="Valle G."/>
            <person name="Vetter I."/>
            <person name="van Vliet-Reedijk J.C."/>
            <person name="Voet M."/>
            <person name="Volckaert G."/>
            <person name="Vreken P."/>
            <person name="Wang H."/>
            <person name="Warmington J.R."/>
            <person name="von Wettstein D."/>
            <person name="Wicksteed B.L."/>
            <person name="Wilson C."/>
            <person name="Wurst H."/>
            <person name="Xu G."/>
            <person name="Yoshikawa A."/>
            <person name="Zimmermann F.K."/>
            <person name="Sgouros J.G."/>
        </authorList>
    </citation>
    <scope>NUCLEOTIDE SEQUENCE [LARGE SCALE GENOMIC DNA]</scope>
    <source>
        <strain>ATCC 204508 / S288c</strain>
    </source>
</reference>
<reference key="2">
    <citation type="journal article" date="2014" name="G3 (Bethesda)">
        <title>The reference genome sequence of Saccharomyces cerevisiae: Then and now.</title>
        <authorList>
            <person name="Engel S.R."/>
            <person name="Dietrich F.S."/>
            <person name="Fisk D.G."/>
            <person name="Binkley G."/>
            <person name="Balakrishnan R."/>
            <person name="Costanzo M.C."/>
            <person name="Dwight S.S."/>
            <person name="Hitz B.C."/>
            <person name="Karra K."/>
            <person name="Nash R.S."/>
            <person name="Weng S."/>
            <person name="Wong E.D."/>
            <person name="Lloyd P."/>
            <person name="Skrzypek M.S."/>
            <person name="Miyasato S.R."/>
            <person name="Simison M."/>
            <person name="Cherry J.M."/>
        </authorList>
    </citation>
    <scope>GENOME REANNOTATION</scope>
    <source>
        <strain>ATCC 204508 / S288c</strain>
    </source>
</reference>
<reference key="3">
    <citation type="journal article" date="2005" name="J. Biol. Chem.">
        <title>A family of basic amino acid transporters of the vacuolar membrane from Saccharomyces cerevisiae.</title>
        <authorList>
            <person name="Shimazu M."/>
            <person name="Sekito T."/>
            <person name="Akiyama K."/>
            <person name="Ohsumi Y."/>
            <person name="Kakinuma Y."/>
        </authorList>
    </citation>
    <scope>FUNCTION</scope>
</reference>
<reference key="4">
    <citation type="journal article" date="2006" name="Proc. Natl. Acad. Sci. U.S.A.">
        <title>A global topology map of the Saccharomyces cerevisiae membrane proteome.</title>
        <authorList>
            <person name="Kim H."/>
            <person name="Melen K."/>
            <person name="Oesterberg M."/>
            <person name="von Heijne G."/>
        </authorList>
    </citation>
    <scope>TOPOLOGY [LARGE SCALE ANALYSIS]</scope>
    <source>
        <strain>ATCC 208353 / W303-1A</strain>
    </source>
</reference>
<dbReference type="EMBL" id="X59720">
    <property type="protein sequence ID" value="CAA42398.1"/>
    <property type="molecule type" value="Genomic_DNA"/>
</dbReference>
<dbReference type="EMBL" id="BK006937">
    <property type="protein sequence ID" value="DAA07419.1"/>
    <property type="molecule type" value="Genomic_DNA"/>
</dbReference>
<dbReference type="PIR" id="S19400">
    <property type="entry name" value="S19400"/>
</dbReference>
<dbReference type="RefSeq" id="NP_009864.1">
    <property type="nucleotide sequence ID" value="NM_001178710.1"/>
</dbReference>
<dbReference type="SMR" id="P25594"/>
<dbReference type="BioGRID" id="30920">
    <property type="interactions" value="32"/>
</dbReference>
<dbReference type="DIP" id="DIP-5032N"/>
<dbReference type="FunCoup" id="P25594">
    <property type="interactions" value="47"/>
</dbReference>
<dbReference type="IntAct" id="P25594">
    <property type="interactions" value="3"/>
</dbReference>
<dbReference type="MINT" id="P25594"/>
<dbReference type="STRING" id="4932.YCL069W"/>
<dbReference type="GlyCosmos" id="P25594">
    <property type="glycosylation" value="1 site, No reported glycans"/>
</dbReference>
<dbReference type="GlyGen" id="P25594">
    <property type="glycosylation" value="1 site"/>
</dbReference>
<dbReference type="PaxDb" id="4932-YCL069W"/>
<dbReference type="EnsemblFungi" id="YCL069W_mRNA">
    <property type="protein sequence ID" value="YCL069W"/>
    <property type="gene ID" value="YCL069W"/>
</dbReference>
<dbReference type="GeneID" id="850290"/>
<dbReference type="KEGG" id="sce:YCL069W"/>
<dbReference type="AGR" id="SGD:S000000574"/>
<dbReference type="SGD" id="S000000574">
    <property type="gene designation" value="VBA3"/>
</dbReference>
<dbReference type="VEuPathDB" id="FungiDB:YCL069W"/>
<dbReference type="eggNOG" id="KOG0254">
    <property type="taxonomic scope" value="Eukaryota"/>
</dbReference>
<dbReference type="GeneTree" id="ENSGT00940000176638"/>
<dbReference type="HOGENOM" id="CLU_000960_22_1_1"/>
<dbReference type="InParanoid" id="P25594"/>
<dbReference type="OMA" id="CYYINLP"/>
<dbReference type="OrthoDB" id="10021397at2759"/>
<dbReference type="BioCyc" id="YEAST:G3O-29316-MONOMER"/>
<dbReference type="BioGRID-ORCS" id="850290">
    <property type="hits" value="0 hits in 10 CRISPR screens"/>
</dbReference>
<dbReference type="PRO" id="PR:P25594"/>
<dbReference type="Proteomes" id="UP000002311">
    <property type="component" value="Chromosome III"/>
</dbReference>
<dbReference type="RNAct" id="P25594">
    <property type="molecule type" value="protein"/>
</dbReference>
<dbReference type="GO" id="GO:0005783">
    <property type="term" value="C:endoplasmic reticulum"/>
    <property type="evidence" value="ECO:0007005"/>
    <property type="project" value="SGD"/>
</dbReference>
<dbReference type="GO" id="GO:0000329">
    <property type="term" value="C:fungal-type vacuole membrane"/>
    <property type="evidence" value="ECO:0000314"/>
    <property type="project" value="SGD"/>
</dbReference>
<dbReference type="GO" id="GO:0005886">
    <property type="term" value="C:plasma membrane"/>
    <property type="evidence" value="ECO:0000318"/>
    <property type="project" value="GO_Central"/>
</dbReference>
<dbReference type="GO" id="GO:0015174">
    <property type="term" value="F:basic amino acid transmembrane transporter activity"/>
    <property type="evidence" value="ECO:0000314"/>
    <property type="project" value="SGD"/>
</dbReference>
<dbReference type="GO" id="GO:0022857">
    <property type="term" value="F:transmembrane transporter activity"/>
    <property type="evidence" value="ECO:0000318"/>
    <property type="project" value="GO_Central"/>
</dbReference>
<dbReference type="GO" id="GO:0015802">
    <property type="term" value="P:basic amino acid transport"/>
    <property type="evidence" value="ECO:0000315"/>
    <property type="project" value="SGD"/>
</dbReference>
<dbReference type="GO" id="GO:0055085">
    <property type="term" value="P:transmembrane transport"/>
    <property type="evidence" value="ECO:0000314"/>
    <property type="project" value="SGD"/>
</dbReference>
<dbReference type="FunFam" id="1.20.1250.20:FF:000373">
    <property type="entry name" value="Vacuolar basic amino acid transporter"/>
    <property type="match status" value="1"/>
</dbReference>
<dbReference type="Gene3D" id="1.20.1250.20">
    <property type="entry name" value="MFS general substrate transporter like domains"/>
    <property type="match status" value="2"/>
</dbReference>
<dbReference type="InterPro" id="IPR011701">
    <property type="entry name" value="MFS"/>
</dbReference>
<dbReference type="InterPro" id="IPR020846">
    <property type="entry name" value="MFS_dom"/>
</dbReference>
<dbReference type="InterPro" id="IPR036259">
    <property type="entry name" value="MFS_trans_sf"/>
</dbReference>
<dbReference type="PANTHER" id="PTHR23501:SF198">
    <property type="entry name" value="AZOLE RESISTANCE PROTEIN 1-RELATED"/>
    <property type="match status" value="1"/>
</dbReference>
<dbReference type="PANTHER" id="PTHR23501">
    <property type="entry name" value="MAJOR FACILITATOR SUPERFAMILY"/>
    <property type="match status" value="1"/>
</dbReference>
<dbReference type="Pfam" id="PF07690">
    <property type="entry name" value="MFS_1"/>
    <property type="match status" value="1"/>
</dbReference>
<dbReference type="SUPFAM" id="SSF103473">
    <property type="entry name" value="MFS general substrate transporter"/>
    <property type="match status" value="2"/>
</dbReference>
<dbReference type="PROSITE" id="PS50850">
    <property type="entry name" value="MFS"/>
    <property type="match status" value="1"/>
</dbReference>
<feature type="chain" id="PRO_0000173424" description="Vacuolar basic amino acid transporter 3">
    <location>
        <begin position="1"/>
        <end position="458"/>
    </location>
</feature>
<feature type="topological domain" description="Cytoplasmic" evidence="1">
    <location>
        <begin position="1"/>
        <end position="9"/>
    </location>
</feature>
<feature type="transmembrane region" description="Helical" evidence="1">
    <location>
        <begin position="10"/>
        <end position="30"/>
    </location>
</feature>
<feature type="topological domain" description="Vacuolar" evidence="1">
    <location>
        <begin position="31"/>
        <end position="36"/>
    </location>
</feature>
<feature type="transmembrane region" description="Helical" evidence="1">
    <location>
        <begin position="37"/>
        <end position="57"/>
    </location>
</feature>
<feature type="topological domain" description="Cytoplasmic" evidence="1">
    <location>
        <begin position="58"/>
        <end position="67"/>
    </location>
</feature>
<feature type="transmembrane region" description="Helical" evidence="1">
    <location>
        <begin position="68"/>
        <end position="88"/>
    </location>
</feature>
<feature type="topological domain" description="Vacuolar" evidence="1">
    <location>
        <begin position="89"/>
        <end position="132"/>
    </location>
</feature>
<feature type="transmembrane region" description="Helical" evidence="1">
    <location>
        <begin position="133"/>
        <end position="153"/>
    </location>
</feature>
<feature type="topological domain" description="Cytoplasmic" evidence="1">
    <location>
        <begin position="154"/>
        <end position="163"/>
    </location>
</feature>
<feature type="transmembrane region" description="Helical" evidence="1">
    <location>
        <begin position="164"/>
        <end position="184"/>
    </location>
</feature>
<feature type="topological domain" description="Vacuolar" evidence="1">
    <location>
        <begin position="185"/>
        <end position="205"/>
    </location>
</feature>
<feature type="transmembrane region" description="Helical" evidence="1">
    <location>
        <begin position="206"/>
        <end position="226"/>
    </location>
</feature>
<feature type="topological domain" description="Cytoplasmic" evidence="1">
    <location>
        <begin position="227"/>
        <end position="248"/>
    </location>
</feature>
<feature type="transmembrane region" description="Helical" evidence="1">
    <location>
        <begin position="249"/>
        <end position="269"/>
    </location>
</feature>
<feature type="topological domain" description="Vacuolar" evidence="1">
    <location>
        <begin position="270"/>
        <end position="277"/>
    </location>
</feature>
<feature type="transmembrane region" description="Helical" evidence="1">
    <location>
        <begin position="278"/>
        <end position="298"/>
    </location>
</feature>
<feature type="topological domain" description="Cytoplasmic" evidence="1">
    <location>
        <begin position="299"/>
        <end position="306"/>
    </location>
</feature>
<feature type="transmembrane region" description="Helical" evidence="1">
    <location>
        <begin position="307"/>
        <end position="327"/>
    </location>
</feature>
<feature type="topological domain" description="Vacuolar" evidence="1">
    <location>
        <begin position="328"/>
        <end position="415"/>
    </location>
</feature>
<feature type="transmembrane region" description="Helical" evidence="1">
    <location>
        <begin position="416"/>
        <end position="436"/>
    </location>
</feature>
<feature type="topological domain" description="Cytoplasmic" evidence="1">
    <location>
        <begin position="437"/>
        <end position="458"/>
    </location>
</feature>
<feature type="glycosylation site" description="N-linked (GlcNAc...) asparagine" evidence="1">
    <location>
        <position position="195"/>
    </location>
</feature>
<name>VBA3_YEAST</name>
<gene>
    <name type="primary">VBA3</name>
    <name type="ordered locus">YCL069W</name>
    <name type="ORF">YCL69W</name>
</gene>
<protein>
    <recommendedName>
        <fullName>Vacuolar basic amino acid transporter 3</fullName>
    </recommendedName>
</protein>
<evidence type="ECO:0000255" key="1"/>
<evidence type="ECO:0000269" key="2">
    <source>
    </source>
</evidence>
<evidence type="ECO:0000305" key="3"/>
<accession>P25594</accession>
<accession>D6VQV0</accession>